<comment type="function">
    <text evidence="1">Catalyzes the exchange of L-carnitine for gamma-butyrobetaine.</text>
</comment>
<comment type="catalytic activity">
    <reaction evidence="1">
        <text>4-(trimethylamino)butanoate(in) + (R)-carnitine(out) = 4-(trimethylamino)butanoate(out) + (R)-carnitine(in)</text>
        <dbReference type="Rhea" id="RHEA:29427"/>
        <dbReference type="ChEBI" id="CHEBI:16244"/>
        <dbReference type="ChEBI" id="CHEBI:16347"/>
    </reaction>
</comment>
<comment type="pathway">
    <text evidence="1">Amine and polyamine metabolism; carnitine metabolism.</text>
</comment>
<comment type="subunit">
    <text evidence="1">Homotrimer.</text>
</comment>
<comment type="subcellular location">
    <subcellularLocation>
        <location evidence="1">Cell inner membrane</location>
        <topology evidence="1">Multi-pass membrane protein</topology>
    </subcellularLocation>
</comment>
<comment type="similarity">
    <text evidence="1">Belongs to the BCCT transporter (TC 2.A.15) family. CaiT subfamily.</text>
</comment>
<sequence length="504" mass="56573">MKNEKRKTGIEPKVFFPPLIIVGILCWLTVRDLDAANVVINAVFSYVTNVWGWAFEWYMVVMLFGWFWLVFGPYAKKRLGNEPPEFSTASWIFMMFASCTSAAVLFWGSIEIYYYISTPPFGLEPNSTGAKELGLAYSLFHWGPLPWATYSFLSVAFAYFFFVRKMEVIRPSSTLVPLVGEKHAKGLFGTIVDNFYLVALIFAMGTSLGLATPLVTECMQWLFGIPHTLQLDAIIITCWIILNAICVACGLQKGVRIASDVRSYLSFLMLGWVFIVSGASFIMNYFTDSVGMLLMYLPRMLFYTDPIAKGGFPQGWTVFYWAWWVIYAIQMSIFLARISRGRTVRELCFGMVLGLTASTWILWTVLGSNTLLLIDKNIINIPNLIEQYGVARAIIETWAALPLSTATMWGFFILCFIATVTLVNACSYTLAMSTCREVRDGEEPPLLVRIGWSVLVGIIGIVLLALGGLKPIQTAIIAGGCPLFFVNIMVTLSFIKDAKQNWKD</sequence>
<gene>
    <name evidence="1" type="primary">caiT</name>
    <name type="ordered locus">E2348C_0041</name>
</gene>
<name>CAIT_ECO27</name>
<reference key="1">
    <citation type="journal article" date="2009" name="J. Bacteriol.">
        <title>Complete genome sequence and comparative genome analysis of enteropathogenic Escherichia coli O127:H6 strain E2348/69.</title>
        <authorList>
            <person name="Iguchi A."/>
            <person name="Thomson N.R."/>
            <person name="Ogura Y."/>
            <person name="Saunders D."/>
            <person name="Ooka T."/>
            <person name="Henderson I.R."/>
            <person name="Harris D."/>
            <person name="Asadulghani M."/>
            <person name="Kurokawa K."/>
            <person name="Dean P."/>
            <person name="Kenny B."/>
            <person name="Quail M.A."/>
            <person name="Thurston S."/>
            <person name="Dougan G."/>
            <person name="Hayashi T."/>
            <person name="Parkhill J."/>
            <person name="Frankel G."/>
        </authorList>
    </citation>
    <scope>NUCLEOTIDE SEQUENCE [LARGE SCALE GENOMIC DNA]</scope>
    <source>
        <strain>E2348/69 / EPEC</strain>
    </source>
</reference>
<dbReference type="EMBL" id="FM180568">
    <property type="protein sequence ID" value="CAS07589.1"/>
    <property type="molecule type" value="Genomic_DNA"/>
</dbReference>
<dbReference type="RefSeq" id="WP_000787104.1">
    <property type="nucleotide sequence ID" value="NC_011601.1"/>
</dbReference>
<dbReference type="SMR" id="B7UI86"/>
<dbReference type="KEGG" id="ecg:E2348C_0041"/>
<dbReference type="HOGENOM" id="CLU_010118_6_0_6"/>
<dbReference type="UniPathway" id="UPA00117"/>
<dbReference type="Proteomes" id="UP000008205">
    <property type="component" value="Chromosome"/>
</dbReference>
<dbReference type="GO" id="GO:0005886">
    <property type="term" value="C:plasma membrane"/>
    <property type="evidence" value="ECO:0007669"/>
    <property type="project" value="UniProtKB-SubCell"/>
</dbReference>
<dbReference type="GO" id="GO:0044667">
    <property type="term" value="F:(R)-carnitine:4-(trimethylammonio)butanoate antiporter activity"/>
    <property type="evidence" value="ECO:0007669"/>
    <property type="project" value="UniProtKB-UniRule"/>
</dbReference>
<dbReference type="GO" id="GO:1900751">
    <property type="term" value="P:4-(trimethylammonio)butanoate transport"/>
    <property type="evidence" value="ECO:0007669"/>
    <property type="project" value="InterPro"/>
</dbReference>
<dbReference type="GO" id="GO:0009437">
    <property type="term" value="P:carnitine metabolic process"/>
    <property type="evidence" value="ECO:0007669"/>
    <property type="project" value="UniProtKB-UniRule"/>
</dbReference>
<dbReference type="HAMAP" id="MF_01049">
    <property type="entry name" value="CaiT"/>
    <property type="match status" value="1"/>
</dbReference>
<dbReference type="InterPro" id="IPR018093">
    <property type="entry name" value="BCCT_CS"/>
</dbReference>
<dbReference type="InterPro" id="IPR000060">
    <property type="entry name" value="BCCT_transptr"/>
</dbReference>
<dbReference type="InterPro" id="IPR023449">
    <property type="entry name" value="BCCT_transptr_CaiT"/>
</dbReference>
<dbReference type="NCBIfam" id="TIGR00842">
    <property type="entry name" value="bcct"/>
    <property type="match status" value="1"/>
</dbReference>
<dbReference type="NCBIfam" id="NF002887">
    <property type="entry name" value="PRK03356.1"/>
    <property type="match status" value="1"/>
</dbReference>
<dbReference type="PANTHER" id="PTHR30047">
    <property type="entry name" value="HIGH-AFFINITY CHOLINE TRANSPORT PROTEIN-RELATED"/>
    <property type="match status" value="1"/>
</dbReference>
<dbReference type="PANTHER" id="PTHR30047:SF11">
    <property type="entry name" value="L-CARNITINE_GAMMA-BUTYROBETAINE ANTIPORTER"/>
    <property type="match status" value="1"/>
</dbReference>
<dbReference type="Pfam" id="PF02028">
    <property type="entry name" value="BCCT"/>
    <property type="match status" value="1"/>
</dbReference>
<dbReference type="PROSITE" id="PS01303">
    <property type="entry name" value="BCCT"/>
    <property type="match status" value="1"/>
</dbReference>
<accession>B7UI86</accession>
<proteinExistence type="inferred from homology"/>
<feature type="chain" id="PRO_1000149618" description="L-carnitine/gamma-butyrobetaine antiporter">
    <location>
        <begin position="1"/>
        <end position="504"/>
    </location>
</feature>
<feature type="transmembrane region" description="Helical" evidence="1">
    <location>
        <begin position="10"/>
        <end position="30"/>
    </location>
</feature>
<feature type="transmembrane region" description="Helical" evidence="1">
    <location>
        <begin position="51"/>
        <end position="71"/>
    </location>
</feature>
<feature type="transmembrane region" description="Helical" evidence="1">
    <location>
        <begin position="92"/>
        <end position="112"/>
    </location>
</feature>
<feature type="transmembrane region" description="Helical" evidence="1">
    <location>
        <begin position="143"/>
        <end position="163"/>
    </location>
</feature>
<feature type="transmembrane region" description="Helical" evidence="1">
    <location>
        <begin position="195"/>
        <end position="215"/>
    </location>
</feature>
<feature type="transmembrane region" description="Helical" evidence="1">
    <location>
        <begin position="231"/>
        <end position="251"/>
    </location>
</feature>
<feature type="transmembrane region" description="Helical" evidence="1">
    <location>
        <begin position="263"/>
        <end position="283"/>
    </location>
</feature>
<feature type="transmembrane region" description="Helical" evidence="1">
    <location>
        <begin position="316"/>
        <end position="336"/>
    </location>
</feature>
<feature type="transmembrane region" description="Helical" evidence="1">
    <location>
        <begin position="347"/>
        <end position="367"/>
    </location>
</feature>
<feature type="transmembrane region" description="Helical" evidence="1">
    <location>
        <begin position="398"/>
        <end position="418"/>
    </location>
</feature>
<feature type="transmembrane region" description="Helical" evidence="1">
    <location>
        <begin position="446"/>
        <end position="466"/>
    </location>
</feature>
<feature type="transmembrane region" description="Helical" evidence="1">
    <location>
        <begin position="475"/>
        <end position="495"/>
    </location>
</feature>
<organism>
    <name type="scientific">Escherichia coli O127:H6 (strain E2348/69 / EPEC)</name>
    <dbReference type="NCBI Taxonomy" id="574521"/>
    <lineage>
        <taxon>Bacteria</taxon>
        <taxon>Pseudomonadati</taxon>
        <taxon>Pseudomonadota</taxon>
        <taxon>Gammaproteobacteria</taxon>
        <taxon>Enterobacterales</taxon>
        <taxon>Enterobacteriaceae</taxon>
        <taxon>Escherichia</taxon>
    </lineage>
</organism>
<protein>
    <recommendedName>
        <fullName evidence="1">L-carnitine/gamma-butyrobetaine antiporter</fullName>
    </recommendedName>
</protein>
<evidence type="ECO:0000255" key="1">
    <source>
        <dbReference type="HAMAP-Rule" id="MF_01049"/>
    </source>
</evidence>
<keyword id="KW-0050">Antiport</keyword>
<keyword id="KW-0997">Cell inner membrane</keyword>
<keyword id="KW-1003">Cell membrane</keyword>
<keyword id="KW-0472">Membrane</keyword>
<keyword id="KW-1185">Reference proteome</keyword>
<keyword id="KW-0812">Transmembrane</keyword>
<keyword id="KW-1133">Transmembrane helix</keyword>
<keyword id="KW-0813">Transport</keyword>